<sequence length="88" mass="9768">MLDTKFDELMDFPCAFPFKVVGEAHETLTDKVVAVVQKHAPGDYSPSTKTSSKGSYHSITIRVTVTSKDHIEILYTELAAIEGVRRVL</sequence>
<dbReference type="EMBL" id="CP000563">
    <property type="protein sequence ID" value="ABN62760.1"/>
    <property type="molecule type" value="Genomic_DNA"/>
</dbReference>
<dbReference type="SMR" id="A3D7P7"/>
<dbReference type="STRING" id="325240.Sbal_3280"/>
<dbReference type="KEGG" id="sbl:Sbal_3280"/>
<dbReference type="HOGENOM" id="CLU_161438_2_1_6"/>
<dbReference type="OrthoDB" id="9793424at2"/>
<dbReference type="Proteomes" id="UP000001557">
    <property type="component" value="Chromosome"/>
</dbReference>
<dbReference type="GO" id="GO:0005829">
    <property type="term" value="C:cytosol"/>
    <property type="evidence" value="ECO:0007669"/>
    <property type="project" value="TreeGrafter"/>
</dbReference>
<dbReference type="Gene3D" id="3.30.70.260">
    <property type="match status" value="1"/>
</dbReference>
<dbReference type="HAMAP" id="MF_00659">
    <property type="entry name" value="UPF0250"/>
    <property type="match status" value="1"/>
</dbReference>
<dbReference type="InterPro" id="IPR007454">
    <property type="entry name" value="UPF0250_YbeD-like"/>
</dbReference>
<dbReference type="InterPro" id="IPR027471">
    <property type="entry name" value="YbeD-like_sf"/>
</dbReference>
<dbReference type="NCBIfam" id="NF003447">
    <property type="entry name" value="PRK04998.1"/>
    <property type="match status" value="1"/>
</dbReference>
<dbReference type="PANTHER" id="PTHR38036">
    <property type="entry name" value="UPF0250 PROTEIN YBED"/>
    <property type="match status" value="1"/>
</dbReference>
<dbReference type="PANTHER" id="PTHR38036:SF1">
    <property type="entry name" value="UPF0250 PROTEIN YBED"/>
    <property type="match status" value="1"/>
</dbReference>
<dbReference type="Pfam" id="PF04359">
    <property type="entry name" value="DUF493"/>
    <property type="match status" value="1"/>
</dbReference>
<dbReference type="SUPFAM" id="SSF117991">
    <property type="entry name" value="YbeD/HP0495-like"/>
    <property type="match status" value="1"/>
</dbReference>
<evidence type="ECO:0000255" key="1">
    <source>
        <dbReference type="HAMAP-Rule" id="MF_00659"/>
    </source>
</evidence>
<comment type="similarity">
    <text evidence="1">Belongs to the UPF0250 family.</text>
</comment>
<proteinExistence type="inferred from homology"/>
<protein>
    <recommendedName>
        <fullName evidence="1">UPF0250 protein Sbal_3280</fullName>
    </recommendedName>
</protein>
<gene>
    <name type="ordered locus">Sbal_3280</name>
</gene>
<name>Y3280_SHEB5</name>
<organism>
    <name type="scientific">Shewanella baltica (strain OS155 / ATCC BAA-1091)</name>
    <dbReference type="NCBI Taxonomy" id="325240"/>
    <lineage>
        <taxon>Bacteria</taxon>
        <taxon>Pseudomonadati</taxon>
        <taxon>Pseudomonadota</taxon>
        <taxon>Gammaproteobacteria</taxon>
        <taxon>Alteromonadales</taxon>
        <taxon>Shewanellaceae</taxon>
        <taxon>Shewanella</taxon>
    </lineage>
</organism>
<reference key="1">
    <citation type="submission" date="2007-02" db="EMBL/GenBank/DDBJ databases">
        <title>Complete sequence of chromosome of Shewanella baltica OS155.</title>
        <authorList>
            <consortium name="US DOE Joint Genome Institute"/>
            <person name="Copeland A."/>
            <person name="Lucas S."/>
            <person name="Lapidus A."/>
            <person name="Barry K."/>
            <person name="Detter J.C."/>
            <person name="Glavina del Rio T."/>
            <person name="Hammon N."/>
            <person name="Israni S."/>
            <person name="Dalin E."/>
            <person name="Tice H."/>
            <person name="Pitluck S."/>
            <person name="Sims D.R."/>
            <person name="Brettin T."/>
            <person name="Bruce D."/>
            <person name="Han C."/>
            <person name="Tapia R."/>
            <person name="Brainard J."/>
            <person name="Schmutz J."/>
            <person name="Larimer F."/>
            <person name="Land M."/>
            <person name="Hauser L."/>
            <person name="Kyrpides N."/>
            <person name="Mikhailova N."/>
            <person name="Brettar I."/>
            <person name="Klappenbach J."/>
            <person name="Konstantinidis K."/>
            <person name="Rodrigues J."/>
            <person name="Tiedje J."/>
            <person name="Richardson P."/>
        </authorList>
    </citation>
    <scope>NUCLEOTIDE SEQUENCE [LARGE SCALE GENOMIC DNA]</scope>
    <source>
        <strain>OS155 / ATCC BAA-1091</strain>
    </source>
</reference>
<feature type="chain" id="PRO_1000061890" description="UPF0250 protein Sbal_3280">
    <location>
        <begin position="1"/>
        <end position="88"/>
    </location>
</feature>
<keyword id="KW-1185">Reference proteome</keyword>
<accession>A3D7P7</accession>